<accession>A9LYE9</accession>
<accession>Q4FGG4</accession>
<gene>
    <name evidence="1" type="primary">ccsA</name>
</gene>
<evidence type="ECO:0000255" key="1">
    <source>
        <dbReference type="HAMAP-Rule" id="MF_01391"/>
    </source>
</evidence>
<protein>
    <recommendedName>
        <fullName evidence="1">Cytochrome c biogenesis protein CcsA</fullName>
    </recommendedName>
</protein>
<reference key="1">
    <citation type="submission" date="2007-11" db="EMBL/GenBank/DDBJ databases">
        <title>The complete chloroplast genome of Acorus americanus.</title>
        <authorList>
            <person name="Peery R.M."/>
            <person name="Chumley T.W."/>
            <person name="Kuehl J.V."/>
            <person name="Boore J.L."/>
            <person name="Raubeson L.A."/>
        </authorList>
    </citation>
    <scope>NUCLEOTIDE SEQUENCE [LARGE SCALE GENOMIC DNA]</scope>
</reference>
<reference key="2">
    <citation type="journal article" date="2005" name="Mol. Biol. Evol.">
        <title>Identifying the basal angiosperm node in chloroplast genome phylogenies: sampling one's way out of the Felsenstein zone.</title>
        <authorList>
            <person name="Leebens-Mack J."/>
            <person name="Raubeson L.A."/>
            <person name="Cui L."/>
            <person name="Kuehl J.V."/>
            <person name="Fourcade M.H."/>
            <person name="Chumley T.W."/>
            <person name="Boore J.L."/>
            <person name="Jansen R.K."/>
            <person name="dePamphilis C.W."/>
        </authorList>
    </citation>
    <scope>NUCLEOTIDE SEQUENCE [GENOMIC DNA] OF 1-316</scope>
</reference>
<sequence length="321" mass="36708">MIFSTLEHILTHISFSIISVVITIQLMNLLVHELVQLGDASEKGMIATFFSITGLLVTRWIYSGHFPLSDLYESLIFLSWSFSIIHMVPYFRNHRNHFSAITAPSAIFTQGFATSGLLTEMHQSIILVPALQSQWLMMHVSMMLLSYAALLCGSLLSVALLVITFRKNSDIFDKRNNFLIRSFFFGEIEYLNEKRSVLQNTSFDSFTNYHKYQLTQRLDFWSYRVISLGFIFLTIGILSGAVWANEAWGSYWNWDPKEIWAFITWAIFAIYLHTRTNHSLQGANSAIVASIGFLIIWICYFGVNLLGIGLHSYGSFTLISN</sequence>
<organism>
    <name type="scientific">Acorus calamus var. americanus</name>
    <name type="common">American sweet flag</name>
    <name type="synonym">Acorus americanus</name>
    <dbReference type="NCBI Taxonomy" id="263995"/>
    <lineage>
        <taxon>Eukaryota</taxon>
        <taxon>Viridiplantae</taxon>
        <taxon>Streptophyta</taxon>
        <taxon>Embryophyta</taxon>
        <taxon>Tracheophyta</taxon>
        <taxon>Spermatophyta</taxon>
        <taxon>Magnoliopsida</taxon>
        <taxon>Liliopsida</taxon>
        <taxon>Acoraceae</taxon>
        <taxon>Acorus</taxon>
    </lineage>
</organism>
<proteinExistence type="inferred from homology"/>
<dbReference type="EMBL" id="EU273602">
    <property type="protein sequence ID" value="ABX38792.1"/>
    <property type="molecule type" value="Genomic_DNA"/>
</dbReference>
<dbReference type="EMBL" id="DQ069367">
    <property type="protein sequence ID" value="AAZ03811.1"/>
    <property type="molecule type" value="Genomic_DNA"/>
</dbReference>
<dbReference type="RefSeq" id="YP_001586230.1">
    <property type="nucleotide sequence ID" value="NC_010093.1"/>
</dbReference>
<dbReference type="SMR" id="A9LYE9"/>
<dbReference type="GeneID" id="5777706"/>
<dbReference type="GO" id="GO:0009535">
    <property type="term" value="C:chloroplast thylakoid membrane"/>
    <property type="evidence" value="ECO:0007669"/>
    <property type="project" value="UniProtKB-SubCell"/>
</dbReference>
<dbReference type="GO" id="GO:0005886">
    <property type="term" value="C:plasma membrane"/>
    <property type="evidence" value="ECO:0007669"/>
    <property type="project" value="TreeGrafter"/>
</dbReference>
<dbReference type="GO" id="GO:0020037">
    <property type="term" value="F:heme binding"/>
    <property type="evidence" value="ECO:0007669"/>
    <property type="project" value="InterPro"/>
</dbReference>
<dbReference type="GO" id="GO:0017004">
    <property type="term" value="P:cytochrome complex assembly"/>
    <property type="evidence" value="ECO:0007669"/>
    <property type="project" value="UniProtKB-UniRule"/>
</dbReference>
<dbReference type="HAMAP" id="MF_01391">
    <property type="entry name" value="CytC_CcsA"/>
    <property type="match status" value="1"/>
</dbReference>
<dbReference type="InterPro" id="IPR002541">
    <property type="entry name" value="Cyt_c_assembly"/>
</dbReference>
<dbReference type="InterPro" id="IPR017562">
    <property type="entry name" value="Cyt_c_biogenesis_CcsA"/>
</dbReference>
<dbReference type="InterPro" id="IPR045062">
    <property type="entry name" value="Cyt_c_biogenesis_CcsA/CcmC"/>
</dbReference>
<dbReference type="NCBIfam" id="TIGR03144">
    <property type="entry name" value="cytochr_II_ccsB"/>
    <property type="match status" value="1"/>
</dbReference>
<dbReference type="PANTHER" id="PTHR30071:SF1">
    <property type="entry name" value="CYTOCHROME B_B6 PROTEIN-RELATED"/>
    <property type="match status" value="1"/>
</dbReference>
<dbReference type="PANTHER" id="PTHR30071">
    <property type="entry name" value="HEME EXPORTER PROTEIN C"/>
    <property type="match status" value="1"/>
</dbReference>
<dbReference type="Pfam" id="PF01578">
    <property type="entry name" value="Cytochrom_C_asm"/>
    <property type="match status" value="1"/>
</dbReference>
<geneLocation type="chloroplast"/>
<feature type="chain" id="PRO_0000353725" description="Cytochrome c biogenesis protein CcsA">
    <location>
        <begin position="1"/>
        <end position="321"/>
    </location>
</feature>
<feature type="transmembrane region" description="Helical" evidence="1">
    <location>
        <begin position="9"/>
        <end position="29"/>
    </location>
</feature>
<feature type="transmembrane region" description="Helical" evidence="1">
    <location>
        <begin position="44"/>
        <end position="64"/>
    </location>
</feature>
<feature type="transmembrane region" description="Helical" evidence="1">
    <location>
        <begin position="71"/>
        <end position="91"/>
    </location>
</feature>
<feature type="transmembrane region" description="Helical" evidence="1">
    <location>
        <begin position="98"/>
        <end position="118"/>
    </location>
</feature>
<feature type="transmembrane region" description="Helical" evidence="1">
    <location>
        <begin position="143"/>
        <end position="163"/>
    </location>
</feature>
<feature type="transmembrane region" description="Helical" evidence="1">
    <location>
        <begin position="225"/>
        <end position="245"/>
    </location>
</feature>
<feature type="transmembrane region" description="Helical" evidence="1">
    <location>
        <begin position="252"/>
        <end position="272"/>
    </location>
</feature>
<feature type="transmembrane region" description="Helical" evidence="1">
    <location>
        <begin position="286"/>
        <end position="306"/>
    </location>
</feature>
<name>CCSA_ACOCI</name>
<comment type="function">
    <text evidence="1">Required during biogenesis of c-type cytochromes (cytochrome c6 and cytochrome f) at the step of heme attachment.</text>
</comment>
<comment type="subunit">
    <text evidence="1">May interact with Ccs1.</text>
</comment>
<comment type="subcellular location">
    <subcellularLocation>
        <location evidence="1">Plastid</location>
        <location evidence="1">Chloroplast thylakoid membrane</location>
        <topology evidence="1">Multi-pass membrane protein</topology>
    </subcellularLocation>
</comment>
<comment type="similarity">
    <text evidence="1">Belongs to the CcmF/CycK/Ccl1/NrfE/CcsA family.</text>
</comment>
<keyword id="KW-0150">Chloroplast</keyword>
<keyword id="KW-0201">Cytochrome c-type biogenesis</keyword>
<keyword id="KW-0472">Membrane</keyword>
<keyword id="KW-0934">Plastid</keyword>
<keyword id="KW-0793">Thylakoid</keyword>
<keyword id="KW-0812">Transmembrane</keyword>
<keyword id="KW-1133">Transmembrane helix</keyword>